<keyword id="KW-0040">ANK repeat</keyword>
<organism>
    <name type="scientific">African swine fever virus (isolate Warthog/Namibia/Wart80/1980)</name>
    <name type="common">ASFV</name>
    <dbReference type="NCBI Taxonomy" id="561444"/>
    <lineage>
        <taxon>Viruses</taxon>
        <taxon>Varidnaviria</taxon>
        <taxon>Bamfordvirae</taxon>
        <taxon>Nucleocytoviricota</taxon>
        <taxon>Pokkesviricetes</taxon>
        <taxon>Asfuvirales</taxon>
        <taxon>Asfarviridae</taxon>
        <taxon>Asfivirus</taxon>
        <taxon>African swine fever virus</taxon>
    </lineage>
</organism>
<reference key="1">
    <citation type="submission" date="2003-03" db="EMBL/GenBank/DDBJ databases">
        <title>African swine fever virus genomes.</title>
        <authorList>
            <person name="Kutish G.F."/>
            <person name="Rock D.L."/>
        </authorList>
    </citation>
    <scope>NUCLEOTIDE SEQUENCE [LARGE SCALE GENOMIC DNA]</scope>
</reference>
<proteinExistence type="inferred from homology"/>
<organismHost>
    <name type="scientific">Ornithodoros</name>
    <name type="common">relapsing fever ticks</name>
    <dbReference type="NCBI Taxonomy" id="6937"/>
</organismHost>
<organismHost>
    <name type="scientific">Phacochoerus aethiopicus</name>
    <name type="common">Warthog</name>
    <dbReference type="NCBI Taxonomy" id="85517"/>
</organismHost>
<organismHost>
    <name type="scientific">Phacochoerus africanus</name>
    <name type="common">Warthog</name>
    <dbReference type="NCBI Taxonomy" id="41426"/>
</organismHost>
<organismHost>
    <name type="scientific">Potamochoerus larvatus</name>
    <name type="common">Bushpig</name>
    <dbReference type="NCBI Taxonomy" id="273792"/>
</organismHost>
<organismHost>
    <name type="scientific">Sus scrofa</name>
    <name type="common">Pig</name>
    <dbReference type="NCBI Taxonomy" id="9823"/>
</organismHost>
<protein>
    <recommendedName>
        <fullName>Protein MGF 360-3L</fullName>
    </recommendedName>
</protein>
<name>3603L_ASFWA</name>
<evidence type="ECO:0000250" key="1">
    <source>
        <dbReference type="UniProtKB" id="P23165"/>
    </source>
</evidence>
<evidence type="ECO:0000305" key="2"/>
<sequence length="356" mass="41746">MQPSTLQALAKRALATQHVSKDDYYILERCGLWWHEAPISIYIDNDNQIMIRTLCFKEGIKLNTALVLAVKENNEDLIMLFTEWGANINYGLLFINNEHTRNLCRKLGAKEELETSEILRFFFETKCKITSSNVILCHELFSNNPFLQNVNMVDLRMIIYWELKDLTTNSMLNEISFSEMLTKYWYGIAVKYNLKEAIQYFCQEYRHFDEWRLICALSFNNVFDLHEICNTTKVHMSINKMMELACMRDNNFLTIYYCFALGANANRAMLISVKNFCIENMFFCMDLGANVIEHSKTLADIYGYSIIVNILSLKIYKANPILLSKETNPEKINTLLKNYYSKNMLAYDIYCIDNYL</sequence>
<gene>
    <name type="ordered locus">War-005</name>
</gene>
<comment type="function">
    <text evidence="1">Plays a role in virus cell tropism, and may be required for efficient virus replication in macrophages.</text>
</comment>
<comment type="similarity">
    <text evidence="2">Belongs to the asfivirus MGF 360 family.</text>
</comment>
<dbReference type="EMBL" id="AY261366">
    <property type="status" value="NOT_ANNOTATED_CDS"/>
    <property type="molecule type" value="Genomic_DNA"/>
</dbReference>
<dbReference type="Proteomes" id="UP000000858">
    <property type="component" value="Segment"/>
</dbReference>
<dbReference type="GO" id="GO:0042330">
    <property type="term" value="P:taxis"/>
    <property type="evidence" value="ECO:0007669"/>
    <property type="project" value="InterPro"/>
</dbReference>
<dbReference type="InterPro" id="IPR002595">
    <property type="entry name" value="ASFV_MGF360"/>
</dbReference>
<dbReference type="Pfam" id="PF01671">
    <property type="entry name" value="ASFV_360"/>
    <property type="match status" value="1"/>
</dbReference>
<feature type="chain" id="PRO_0000373250" description="Protein MGF 360-3L">
    <location>
        <begin position="1"/>
        <end position="356"/>
    </location>
</feature>
<feature type="repeat" description="ANK">
    <location>
        <begin position="61"/>
        <end position="93"/>
    </location>
</feature>
<accession>P0C9M4</accession>